<evidence type="ECO:0000255" key="1">
    <source>
        <dbReference type="PROSITE-ProRule" id="PRU00119"/>
    </source>
</evidence>
<evidence type="ECO:0000269" key="2">
    <source>
    </source>
</evidence>
<evidence type="ECO:0000303" key="3">
    <source>
    </source>
</evidence>
<evidence type="ECO:0000303" key="4">
    <source>
    </source>
</evidence>
<evidence type="ECO:0000303" key="5">
    <source>
    </source>
</evidence>
<evidence type="ECO:0000305" key="6"/>
<keyword id="KW-0025">Alternative splicing</keyword>
<keyword id="KW-1267">Proteomics identification</keyword>
<keyword id="KW-1185">Reference proteome</keyword>
<organism>
    <name type="scientific">Homo sapiens</name>
    <name type="common">Human</name>
    <dbReference type="NCBI Taxonomy" id="9606"/>
    <lineage>
        <taxon>Eukaryota</taxon>
        <taxon>Metazoa</taxon>
        <taxon>Chordata</taxon>
        <taxon>Craniata</taxon>
        <taxon>Vertebrata</taxon>
        <taxon>Euteleostomi</taxon>
        <taxon>Mammalia</taxon>
        <taxon>Eutheria</taxon>
        <taxon>Euarchontoglires</taxon>
        <taxon>Primates</taxon>
        <taxon>Haplorrhini</taxon>
        <taxon>Catarrhini</taxon>
        <taxon>Hominidae</taxon>
        <taxon>Homo</taxon>
    </lineage>
</organism>
<feature type="chain" id="PRO_0000233994" description="KRAB domain-containing protein 4">
    <location>
        <begin position="1"/>
        <end position="171"/>
    </location>
</feature>
<feature type="domain" description="KRAB" evidence="1">
    <location>
        <begin position="8"/>
        <end position="79"/>
    </location>
</feature>
<feature type="splice variant" id="VSP_018163" description="In isoform 2." evidence="3 4">
    <location>
        <begin position="80"/>
        <end position="84"/>
    </location>
</feature>
<feature type="splice variant" id="VSP_018164" description="In isoform 3." evidence="5">
    <original>EVWQVDEQIDHYKE</original>
    <variation>DVSIFASCILKCCY</variation>
    <location>
        <begin position="85"/>
        <end position="98"/>
    </location>
</feature>
<feature type="splice variant" id="VSP_018165" description="In isoform 3." evidence="5">
    <location>
        <begin position="99"/>
        <end position="171"/>
    </location>
</feature>
<feature type="sequence conflict" description="In Ref. 3; BAA91104." evidence="6" ref="3">
    <original>E</original>
    <variation>G</variation>
    <location>
        <position position="64"/>
    </location>
</feature>
<accession>Q5JUW0</accession>
<accession>A8K0Y8</accession>
<accession>B3KU22</accession>
<accession>Q96EA3</accession>
<accession>Q9NXB1</accession>
<proteinExistence type="evidence at protein level"/>
<dbReference type="EMBL" id="AK000351">
    <property type="protein sequence ID" value="BAA91104.1"/>
    <property type="molecule type" value="mRNA"/>
</dbReference>
<dbReference type="EMBL" id="AK096413">
    <property type="protein sequence ID" value="BAG53284.1"/>
    <property type="molecule type" value="mRNA"/>
</dbReference>
<dbReference type="EMBL" id="AK289703">
    <property type="protein sequence ID" value="BAF82392.1"/>
    <property type="molecule type" value="mRNA"/>
</dbReference>
<dbReference type="EMBL" id="AL139811">
    <property type="status" value="NOT_ANNOTATED_CDS"/>
    <property type="molecule type" value="Genomic_DNA"/>
</dbReference>
<dbReference type="EMBL" id="CH471164">
    <property type="protein sequence ID" value="EAW59263.1"/>
    <property type="molecule type" value="Genomic_DNA"/>
</dbReference>
<dbReference type="EMBL" id="BC012569">
    <property type="protein sequence ID" value="AAH12569.1"/>
    <property type="molecule type" value="mRNA"/>
</dbReference>
<dbReference type="CCDS" id="CCDS14267.1">
    <molecule id="Q5JUW0-2"/>
</dbReference>
<dbReference type="CCDS" id="CCDS48097.1">
    <molecule id="Q5JUW0-1"/>
</dbReference>
<dbReference type="CCDS" id="CCDS48098.1">
    <molecule id="Q5JUW0-3"/>
</dbReference>
<dbReference type="RefSeq" id="NP_001123370.1">
    <molecule id="Q5JUW0-1"/>
    <property type="nucleotide sequence ID" value="NM_001129898.2"/>
</dbReference>
<dbReference type="RefSeq" id="NP_001123371.1">
    <molecule id="Q5JUW0-3"/>
    <property type="nucleotide sequence ID" value="NM_001129899.2"/>
</dbReference>
<dbReference type="RefSeq" id="NP_001123372.1">
    <property type="nucleotide sequence ID" value="NM_001129900.1"/>
</dbReference>
<dbReference type="RefSeq" id="NP_060246.2">
    <molecule id="Q5JUW0-2"/>
    <property type="nucleotide sequence ID" value="NM_017776.3"/>
</dbReference>
<dbReference type="SMR" id="Q5JUW0"/>
<dbReference type="BioGRID" id="120773">
    <property type="interactions" value="19"/>
</dbReference>
<dbReference type="FunCoup" id="Q5JUW0">
    <property type="interactions" value="19"/>
</dbReference>
<dbReference type="IntAct" id="Q5JUW0">
    <property type="interactions" value="25"/>
</dbReference>
<dbReference type="STRING" id="9606.ENSP00000345797"/>
<dbReference type="iPTMnet" id="Q5JUW0"/>
<dbReference type="PhosphoSitePlus" id="Q5JUW0"/>
<dbReference type="BioMuta" id="KRBOX4"/>
<dbReference type="DMDM" id="74742348"/>
<dbReference type="jPOST" id="Q5JUW0"/>
<dbReference type="MassIVE" id="Q5JUW0"/>
<dbReference type="PaxDb" id="9606-ENSP00000345797"/>
<dbReference type="PeptideAtlas" id="Q5JUW0"/>
<dbReference type="ProteomicsDB" id="63298">
    <molecule id="Q5JUW0-1"/>
</dbReference>
<dbReference type="ProteomicsDB" id="63299">
    <molecule id="Q5JUW0-2"/>
</dbReference>
<dbReference type="ProteomicsDB" id="63300">
    <molecule id="Q5JUW0-3"/>
</dbReference>
<dbReference type="Antibodypedia" id="57629">
    <property type="antibodies" value="122 antibodies from 21 providers"/>
</dbReference>
<dbReference type="DNASU" id="55634"/>
<dbReference type="Ensembl" id="ENST00000298190.10">
    <molecule id="Q5JUW0-2"/>
    <property type="protein sequence ID" value="ENSP00000298190.6"/>
    <property type="gene ID" value="ENSG00000147121.16"/>
</dbReference>
<dbReference type="Ensembl" id="ENST00000344302.9">
    <molecule id="Q5JUW0-1"/>
    <property type="protein sequence ID" value="ENSP00000345797.4"/>
    <property type="gene ID" value="ENSG00000147121.16"/>
</dbReference>
<dbReference type="Ensembl" id="ENST00000377919.6">
    <molecule id="Q5JUW0-3"/>
    <property type="protein sequence ID" value="ENSP00000367152.2"/>
    <property type="gene ID" value="ENSG00000147121.16"/>
</dbReference>
<dbReference type="Ensembl" id="ENST00000487081.1">
    <molecule id="Q5JUW0-3"/>
    <property type="protein sequence ID" value="ENSP00000418076.1"/>
    <property type="gene ID" value="ENSG00000147121.16"/>
</dbReference>
<dbReference type="GeneID" id="55634"/>
<dbReference type="KEGG" id="hsa:55634"/>
<dbReference type="MANE-Select" id="ENST00000344302.9">
    <property type="protein sequence ID" value="ENSP00000345797.4"/>
    <property type="RefSeq nucleotide sequence ID" value="NM_001129898.2"/>
    <property type="RefSeq protein sequence ID" value="NP_001123370.1"/>
</dbReference>
<dbReference type="UCSC" id="uc004dgm.5">
    <molecule id="Q5JUW0-1"/>
    <property type="organism name" value="human"/>
</dbReference>
<dbReference type="AGR" id="HGNC:26007"/>
<dbReference type="CTD" id="55634"/>
<dbReference type="DisGeNET" id="55634"/>
<dbReference type="GeneCards" id="KRBOX4"/>
<dbReference type="HGNC" id="HGNC:26007">
    <property type="gene designation" value="KRBOX4"/>
</dbReference>
<dbReference type="HPA" id="ENSG00000147121">
    <property type="expression patterns" value="Low tissue specificity"/>
</dbReference>
<dbReference type="MIM" id="300585">
    <property type="type" value="gene"/>
</dbReference>
<dbReference type="neXtProt" id="NX_Q5JUW0"/>
<dbReference type="OpenTargets" id="ENSG00000147121"/>
<dbReference type="PharmGKB" id="PA142670474"/>
<dbReference type="VEuPathDB" id="HostDB:ENSG00000147121"/>
<dbReference type="eggNOG" id="KOG1721">
    <property type="taxonomic scope" value="Eukaryota"/>
</dbReference>
<dbReference type="GeneTree" id="ENSGT00940000162233"/>
<dbReference type="HOGENOM" id="CLU_002678_69_0_1"/>
<dbReference type="InParanoid" id="Q5JUW0"/>
<dbReference type="OrthoDB" id="9808183at2759"/>
<dbReference type="PAN-GO" id="Q5JUW0">
    <property type="GO annotations" value="0 GO annotations based on evolutionary models"/>
</dbReference>
<dbReference type="PhylomeDB" id="Q5JUW0"/>
<dbReference type="TreeFam" id="TF342644"/>
<dbReference type="PathwayCommons" id="Q5JUW0"/>
<dbReference type="Reactome" id="R-HSA-212436">
    <property type="pathway name" value="Generic Transcription Pathway"/>
</dbReference>
<dbReference type="SignaLink" id="Q5JUW0"/>
<dbReference type="BioGRID-ORCS" id="55634">
    <property type="hits" value="45 hits in 731 CRISPR screens"/>
</dbReference>
<dbReference type="ChiTaRS" id="KRBOX4">
    <property type="organism name" value="human"/>
</dbReference>
<dbReference type="GenomeRNAi" id="55634"/>
<dbReference type="Pharos" id="Q5JUW0">
    <property type="development level" value="Tdark"/>
</dbReference>
<dbReference type="PRO" id="PR:Q5JUW0"/>
<dbReference type="Proteomes" id="UP000005640">
    <property type="component" value="Chromosome X"/>
</dbReference>
<dbReference type="RNAct" id="Q5JUW0">
    <property type="molecule type" value="protein"/>
</dbReference>
<dbReference type="Bgee" id="ENSG00000147121">
    <property type="expression patterns" value="Expressed in body of uterus and 165 other cell types or tissues"/>
</dbReference>
<dbReference type="ExpressionAtlas" id="Q5JUW0">
    <property type="expression patterns" value="baseline and differential"/>
</dbReference>
<dbReference type="GO" id="GO:0006355">
    <property type="term" value="P:regulation of DNA-templated transcription"/>
    <property type="evidence" value="ECO:0007669"/>
    <property type="project" value="InterPro"/>
</dbReference>
<dbReference type="CDD" id="cd07765">
    <property type="entry name" value="KRAB_A-box"/>
    <property type="match status" value="1"/>
</dbReference>
<dbReference type="Gene3D" id="6.10.140.140">
    <property type="match status" value="1"/>
</dbReference>
<dbReference type="InterPro" id="IPR001909">
    <property type="entry name" value="KRAB"/>
</dbReference>
<dbReference type="InterPro" id="IPR036051">
    <property type="entry name" value="KRAB_dom_sf"/>
</dbReference>
<dbReference type="InterPro" id="IPR050169">
    <property type="entry name" value="Krueppel_C2H2_ZnF"/>
</dbReference>
<dbReference type="PANTHER" id="PTHR23232">
    <property type="entry name" value="KRAB DOMAIN C2H2 ZINC FINGER"/>
    <property type="match status" value="1"/>
</dbReference>
<dbReference type="PANTHER" id="PTHR23232:SF98">
    <property type="entry name" value="KRAB DOMAIN-CONTAINING PROTEIN 4"/>
    <property type="match status" value="1"/>
</dbReference>
<dbReference type="Pfam" id="PF01352">
    <property type="entry name" value="KRAB"/>
    <property type="match status" value="1"/>
</dbReference>
<dbReference type="SMART" id="SM00349">
    <property type="entry name" value="KRAB"/>
    <property type="match status" value="1"/>
</dbReference>
<dbReference type="SUPFAM" id="SSF109640">
    <property type="entry name" value="KRAB domain (Kruppel-associated box)"/>
    <property type="match status" value="1"/>
</dbReference>
<dbReference type="PROSITE" id="PS50805">
    <property type="entry name" value="KRAB"/>
    <property type="match status" value="1"/>
</dbReference>
<gene>
    <name type="primary">KRBOX4</name>
    <name type="synonym">ZNF673</name>
</gene>
<name>KRBX4_HUMAN</name>
<reference key="1">
    <citation type="journal article" date="2002" name="Genomics">
        <title>An integrated, functionally annotated gene map of the DXS8026-ELK1 interval on human Xp11.3-Xp11.23: potential hotspot for neurogenetic disorders.</title>
        <authorList>
            <person name="Thiselton D.L."/>
            <person name="McDowall J."/>
            <person name="Brandau O."/>
            <person name="Ramser J."/>
            <person name="d'Esposito F."/>
            <person name="Bhattacharya S.S."/>
            <person name="Ross M.T."/>
            <person name="Hardcastle A.J."/>
            <person name="Meindl A."/>
        </authorList>
    </citation>
    <scope>NUCLEOTIDE SEQUENCE [MRNA] (ISOFORM 2)</scope>
    <scope>ALTERNATIVE SPLICING</scope>
    <scope>TISSUE SPECIFICITY</scope>
</reference>
<reference key="2">
    <citation type="journal article" date="2002" name="Genomics">
        <authorList>
            <person name="Thiselton D.L."/>
            <person name="McDowall J."/>
            <person name="Brandau O."/>
            <person name="Ramser J."/>
            <person name="d'Esposito F."/>
            <person name="Bhattacharya S.S."/>
            <person name="Ross M.T."/>
            <person name="Hardcastle A.J."/>
            <person name="Meindl A."/>
        </authorList>
    </citation>
    <scope>ERRATUM OF PUBMED:11944989</scope>
</reference>
<reference key="3">
    <citation type="journal article" date="2004" name="Nat. Genet.">
        <title>Complete sequencing and characterization of 21,243 full-length human cDNAs.</title>
        <authorList>
            <person name="Ota T."/>
            <person name="Suzuki Y."/>
            <person name="Nishikawa T."/>
            <person name="Otsuki T."/>
            <person name="Sugiyama T."/>
            <person name="Irie R."/>
            <person name="Wakamatsu A."/>
            <person name="Hayashi K."/>
            <person name="Sato H."/>
            <person name="Nagai K."/>
            <person name="Kimura K."/>
            <person name="Makita H."/>
            <person name="Sekine M."/>
            <person name="Obayashi M."/>
            <person name="Nishi T."/>
            <person name="Shibahara T."/>
            <person name="Tanaka T."/>
            <person name="Ishii S."/>
            <person name="Yamamoto J."/>
            <person name="Saito K."/>
            <person name="Kawai Y."/>
            <person name="Isono Y."/>
            <person name="Nakamura Y."/>
            <person name="Nagahari K."/>
            <person name="Murakami K."/>
            <person name="Yasuda T."/>
            <person name="Iwayanagi T."/>
            <person name="Wagatsuma M."/>
            <person name="Shiratori A."/>
            <person name="Sudo H."/>
            <person name="Hosoiri T."/>
            <person name="Kaku Y."/>
            <person name="Kodaira H."/>
            <person name="Kondo H."/>
            <person name="Sugawara M."/>
            <person name="Takahashi M."/>
            <person name="Kanda K."/>
            <person name="Yokoi T."/>
            <person name="Furuya T."/>
            <person name="Kikkawa E."/>
            <person name="Omura Y."/>
            <person name="Abe K."/>
            <person name="Kamihara K."/>
            <person name="Katsuta N."/>
            <person name="Sato K."/>
            <person name="Tanikawa M."/>
            <person name="Yamazaki M."/>
            <person name="Ninomiya K."/>
            <person name="Ishibashi T."/>
            <person name="Yamashita H."/>
            <person name="Murakawa K."/>
            <person name="Fujimori K."/>
            <person name="Tanai H."/>
            <person name="Kimata M."/>
            <person name="Watanabe M."/>
            <person name="Hiraoka S."/>
            <person name="Chiba Y."/>
            <person name="Ishida S."/>
            <person name="Ono Y."/>
            <person name="Takiguchi S."/>
            <person name="Watanabe S."/>
            <person name="Yosida M."/>
            <person name="Hotuta T."/>
            <person name="Kusano J."/>
            <person name="Kanehori K."/>
            <person name="Takahashi-Fujii A."/>
            <person name="Hara H."/>
            <person name="Tanase T.-O."/>
            <person name="Nomura Y."/>
            <person name="Togiya S."/>
            <person name="Komai F."/>
            <person name="Hara R."/>
            <person name="Takeuchi K."/>
            <person name="Arita M."/>
            <person name="Imose N."/>
            <person name="Musashino K."/>
            <person name="Yuuki H."/>
            <person name="Oshima A."/>
            <person name="Sasaki N."/>
            <person name="Aotsuka S."/>
            <person name="Yoshikawa Y."/>
            <person name="Matsunawa H."/>
            <person name="Ichihara T."/>
            <person name="Shiohata N."/>
            <person name="Sano S."/>
            <person name="Moriya S."/>
            <person name="Momiyama H."/>
            <person name="Satoh N."/>
            <person name="Takami S."/>
            <person name="Terashima Y."/>
            <person name="Suzuki O."/>
            <person name="Nakagawa S."/>
            <person name="Senoh A."/>
            <person name="Mizoguchi H."/>
            <person name="Goto Y."/>
            <person name="Shimizu F."/>
            <person name="Wakebe H."/>
            <person name="Hishigaki H."/>
            <person name="Watanabe T."/>
            <person name="Sugiyama A."/>
            <person name="Takemoto M."/>
            <person name="Kawakami B."/>
            <person name="Yamazaki M."/>
            <person name="Watanabe K."/>
            <person name="Kumagai A."/>
            <person name="Itakura S."/>
            <person name="Fukuzumi Y."/>
            <person name="Fujimori Y."/>
            <person name="Komiyama M."/>
            <person name="Tashiro H."/>
            <person name="Tanigami A."/>
            <person name="Fujiwara T."/>
            <person name="Ono T."/>
            <person name="Yamada K."/>
            <person name="Fujii Y."/>
            <person name="Ozaki K."/>
            <person name="Hirao M."/>
            <person name="Ohmori Y."/>
            <person name="Kawabata A."/>
            <person name="Hikiji T."/>
            <person name="Kobatake N."/>
            <person name="Inagaki H."/>
            <person name="Ikema Y."/>
            <person name="Okamoto S."/>
            <person name="Okitani R."/>
            <person name="Kawakami T."/>
            <person name="Noguchi S."/>
            <person name="Itoh T."/>
            <person name="Shigeta K."/>
            <person name="Senba T."/>
            <person name="Matsumura K."/>
            <person name="Nakajima Y."/>
            <person name="Mizuno T."/>
            <person name="Morinaga M."/>
            <person name="Sasaki M."/>
            <person name="Togashi T."/>
            <person name="Oyama M."/>
            <person name="Hata H."/>
            <person name="Watanabe M."/>
            <person name="Komatsu T."/>
            <person name="Mizushima-Sugano J."/>
            <person name="Satoh T."/>
            <person name="Shirai Y."/>
            <person name="Takahashi Y."/>
            <person name="Nakagawa K."/>
            <person name="Okumura K."/>
            <person name="Nagase T."/>
            <person name="Nomura N."/>
            <person name="Kikuchi H."/>
            <person name="Masuho Y."/>
            <person name="Yamashita R."/>
            <person name="Nakai K."/>
            <person name="Yada T."/>
            <person name="Nakamura Y."/>
            <person name="Ohara O."/>
            <person name="Isogai T."/>
            <person name="Sugano S."/>
        </authorList>
    </citation>
    <scope>NUCLEOTIDE SEQUENCE [LARGE SCALE MRNA] (ISOFORMS 1 AND 2)</scope>
    <source>
        <tissue>Brain</tissue>
        <tissue>Hepatoma</tissue>
    </source>
</reference>
<reference key="4">
    <citation type="journal article" date="2005" name="Nature">
        <title>The DNA sequence of the human X chromosome.</title>
        <authorList>
            <person name="Ross M.T."/>
            <person name="Grafham D.V."/>
            <person name="Coffey A.J."/>
            <person name="Scherer S."/>
            <person name="McLay K."/>
            <person name="Muzny D."/>
            <person name="Platzer M."/>
            <person name="Howell G.R."/>
            <person name="Burrows C."/>
            <person name="Bird C.P."/>
            <person name="Frankish A."/>
            <person name="Lovell F.L."/>
            <person name="Howe K.L."/>
            <person name="Ashurst J.L."/>
            <person name="Fulton R.S."/>
            <person name="Sudbrak R."/>
            <person name="Wen G."/>
            <person name="Jones M.C."/>
            <person name="Hurles M.E."/>
            <person name="Andrews T.D."/>
            <person name="Scott C.E."/>
            <person name="Searle S."/>
            <person name="Ramser J."/>
            <person name="Whittaker A."/>
            <person name="Deadman R."/>
            <person name="Carter N.P."/>
            <person name="Hunt S.E."/>
            <person name="Chen R."/>
            <person name="Cree A."/>
            <person name="Gunaratne P."/>
            <person name="Havlak P."/>
            <person name="Hodgson A."/>
            <person name="Metzker M.L."/>
            <person name="Richards S."/>
            <person name="Scott G."/>
            <person name="Steffen D."/>
            <person name="Sodergren E."/>
            <person name="Wheeler D.A."/>
            <person name="Worley K.C."/>
            <person name="Ainscough R."/>
            <person name="Ambrose K.D."/>
            <person name="Ansari-Lari M.A."/>
            <person name="Aradhya S."/>
            <person name="Ashwell R.I."/>
            <person name="Babbage A.K."/>
            <person name="Bagguley C.L."/>
            <person name="Ballabio A."/>
            <person name="Banerjee R."/>
            <person name="Barker G.E."/>
            <person name="Barlow K.F."/>
            <person name="Barrett I.P."/>
            <person name="Bates K.N."/>
            <person name="Beare D.M."/>
            <person name="Beasley H."/>
            <person name="Beasley O."/>
            <person name="Beck A."/>
            <person name="Bethel G."/>
            <person name="Blechschmidt K."/>
            <person name="Brady N."/>
            <person name="Bray-Allen S."/>
            <person name="Bridgeman A.M."/>
            <person name="Brown A.J."/>
            <person name="Brown M.J."/>
            <person name="Bonnin D."/>
            <person name="Bruford E.A."/>
            <person name="Buhay C."/>
            <person name="Burch P."/>
            <person name="Burford D."/>
            <person name="Burgess J."/>
            <person name="Burrill W."/>
            <person name="Burton J."/>
            <person name="Bye J.M."/>
            <person name="Carder C."/>
            <person name="Carrel L."/>
            <person name="Chako J."/>
            <person name="Chapman J.C."/>
            <person name="Chavez D."/>
            <person name="Chen E."/>
            <person name="Chen G."/>
            <person name="Chen Y."/>
            <person name="Chen Z."/>
            <person name="Chinault C."/>
            <person name="Ciccodicola A."/>
            <person name="Clark S.Y."/>
            <person name="Clarke G."/>
            <person name="Clee C.M."/>
            <person name="Clegg S."/>
            <person name="Clerc-Blankenburg K."/>
            <person name="Clifford K."/>
            <person name="Cobley V."/>
            <person name="Cole C.G."/>
            <person name="Conquer J.S."/>
            <person name="Corby N."/>
            <person name="Connor R.E."/>
            <person name="David R."/>
            <person name="Davies J."/>
            <person name="Davis C."/>
            <person name="Davis J."/>
            <person name="Delgado O."/>
            <person name="Deshazo D."/>
            <person name="Dhami P."/>
            <person name="Ding Y."/>
            <person name="Dinh H."/>
            <person name="Dodsworth S."/>
            <person name="Draper H."/>
            <person name="Dugan-Rocha S."/>
            <person name="Dunham A."/>
            <person name="Dunn M."/>
            <person name="Durbin K.J."/>
            <person name="Dutta I."/>
            <person name="Eades T."/>
            <person name="Ellwood M."/>
            <person name="Emery-Cohen A."/>
            <person name="Errington H."/>
            <person name="Evans K.L."/>
            <person name="Faulkner L."/>
            <person name="Francis F."/>
            <person name="Frankland J."/>
            <person name="Fraser A.E."/>
            <person name="Galgoczy P."/>
            <person name="Gilbert J."/>
            <person name="Gill R."/>
            <person name="Gloeckner G."/>
            <person name="Gregory S.G."/>
            <person name="Gribble S."/>
            <person name="Griffiths C."/>
            <person name="Grocock R."/>
            <person name="Gu Y."/>
            <person name="Gwilliam R."/>
            <person name="Hamilton C."/>
            <person name="Hart E.A."/>
            <person name="Hawes A."/>
            <person name="Heath P.D."/>
            <person name="Heitmann K."/>
            <person name="Hennig S."/>
            <person name="Hernandez J."/>
            <person name="Hinzmann B."/>
            <person name="Ho S."/>
            <person name="Hoffs M."/>
            <person name="Howden P.J."/>
            <person name="Huckle E.J."/>
            <person name="Hume J."/>
            <person name="Hunt P.J."/>
            <person name="Hunt A.R."/>
            <person name="Isherwood J."/>
            <person name="Jacob L."/>
            <person name="Johnson D."/>
            <person name="Jones S."/>
            <person name="de Jong P.J."/>
            <person name="Joseph S.S."/>
            <person name="Keenan S."/>
            <person name="Kelly S."/>
            <person name="Kershaw J.K."/>
            <person name="Khan Z."/>
            <person name="Kioschis P."/>
            <person name="Klages S."/>
            <person name="Knights A.J."/>
            <person name="Kosiura A."/>
            <person name="Kovar-Smith C."/>
            <person name="Laird G.K."/>
            <person name="Langford C."/>
            <person name="Lawlor S."/>
            <person name="Leversha M."/>
            <person name="Lewis L."/>
            <person name="Liu W."/>
            <person name="Lloyd C."/>
            <person name="Lloyd D.M."/>
            <person name="Loulseged H."/>
            <person name="Loveland J.E."/>
            <person name="Lovell J.D."/>
            <person name="Lozado R."/>
            <person name="Lu J."/>
            <person name="Lyne R."/>
            <person name="Ma J."/>
            <person name="Maheshwari M."/>
            <person name="Matthews L.H."/>
            <person name="McDowall J."/>
            <person name="McLaren S."/>
            <person name="McMurray A."/>
            <person name="Meidl P."/>
            <person name="Meitinger T."/>
            <person name="Milne S."/>
            <person name="Miner G."/>
            <person name="Mistry S.L."/>
            <person name="Morgan M."/>
            <person name="Morris S."/>
            <person name="Mueller I."/>
            <person name="Mullikin J.C."/>
            <person name="Nguyen N."/>
            <person name="Nordsiek G."/>
            <person name="Nyakatura G."/>
            <person name="O'dell C.N."/>
            <person name="Okwuonu G."/>
            <person name="Palmer S."/>
            <person name="Pandian R."/>
            <person name="Parker D."/>
            <person name="Parrish J."/>
            <person name="Pasternak S."/>
            <person name="Patel D."/>
            <person name="Pearce A.V."/>
            <person name="Pearson D.M."/>
            <person name="Pelan S.E."/>
            <person name="Perez L."/>
            <person name="Porter K.M."/>
            <person name="Ramsey Y."/>
            <person name="Reichwald K."/>
            <person name="Rhodes S."/>
            <person name="Ridler K.A."/>
            <person name="Schlessinger D."/>
            <person name="Schueler M.G."/>
            <person name="Sehra H.K."/>
            <person name="Shaw-Smith C."/>
            <person name="Shen H."/>
            <person name="Sheridan E.M."/>
            <person name="Shownkeen R."/>
            <person name="Skuce C.D."/>
            <person name="Smith M.L."/>
            <person name="Sotheran E.C."/>
            <person name="Steingruber H.E."/>
            <person name="Steward C.A."/>
            <person name="Storey R."/>
            <person name="Swann R.M."/>
            <person name="Swarbreck D."/>
            <person name="Tabor P.E."/>
            <person name="Taudien S."/>
            <person name="Taylor T."/>
            <person name="Teague B."/>
            <person name="Thomas K."/>
            <person name="Thorpe A."/>
            <person name="Timms K."/>
            <person name="Tracey A."/>
            <person name="Trevanion S."/>
            <person name="Tromans A.C."/>
            <person name="d'Urso M."/>
            <person name="Verduzco D."/>
            <person name="Villasana D."/>
            <person name="Waldron L."/>
            <person name="Wall M."/>
            <person name="Wang Q."/>
            <person name="Warren J."/>
            <person name="Warry G.L."/>
            <person name="Wei X."/>
            <person name="West A."/>
            <person name="Whitehead S.L."/>
            <person name="Whiteley M.N."/>
            <person name="Wilkinson J.E."/>
            <person name="Willey D.L."/>
            <person name="Williams G."/>
            <person name="Williams L."/>
            <person name="Williamson A."/>
            <person name="Williamson H."/>
            <person name="Wilming L."/>
            <person name="Woodmansey R.L."/>
            <person name="Wray P.W."/>
            <person name="Yen J."/>
            <person name="Zhang J."/>
            <person name="Zhou J."/>
            <person name="Zoghbi H."/>
            <person name="Zorilla S."/>
            <person name="Buck D."/>
            <person name="Reinhardt R."/>
            <person name="Poustka A."/>
            <person name="Rosenthal A."/>
            <person name="Lehrach H."/>
            <person name="Meindl A."/>
            <person name="Minx P.J."/>
            <person name="Hillier L.W."/>
            <person name="Willard H.F."/>
            <person name="Wilson R.K."/>
            <person name="Waterston R.H."/>
            <person name="Rice C.M."/>
            <person name="Vaudin M."/>
            <person name="Coulson A."/>
            <person name="Nelson D.L."/>
            <person name="Weinstock G."/>
            <person name="Sulston J.E."/>
            <person name="Durbin R.M."/>
            <person name="Hubbard T."/>
            <person name="Gibbs R.A."/>
            <person name="Beck S."/>
            <person name="Rogers J."/>
            <person name="Bentley D.R."/>
        </authorList>
    </citation>
    <scope>NUCLEOTIDE SEQUENCE [LARGE SCALE GENOMIC DNA]</scope>
</reference>
<reference key="5">
    <citation type="submission" date="2005-07" db="EMBL/GenBank/DDBJ databases">
        <authorList>
            <person name="Mural R.J."/>
            <person name="Istrail S."/>
            <person name="Sutton G.G."/>
            <person name="Florea L."/>
            <person name="Halpern A.L."/>
            <person name="Mobarry C.M."/>
            <person name="Lippert R."/>
            <person name="Walenz B."/>
            <person name="Shatkay H."/>
            <person name="Dew I."/>
            <person name="Miller J.R."/>
            <person name="Flanigan M.J."/>
            <person name="Edwards N.J."/>
            <person name="Bolanos R."/>
            <person name="Fasulo D."/>
            <person name="Halldorsson B.V."/>
            <person name="Hannenhalli S."/>
            <person name="Turner R."/>
            <person name="Yooseph S."/>
            <person name="Lu F."/>
            <person name="Nusskern D.R."/>
            <person name="Shue B.C."/>
            <person name="Zheng X.H."/>
            <person name="Zhong F."/>
            <person name="Delcher A.L."/>
            <person name="Huson D.H."/>
            <person name="Kravitz S.A."/>
            <person name="Mouchard L."/>
            <person name="Reinert K."/>
            <person name="Remington K.A."/>
            <person name="Clark A.G."/>
            <person name="Waterman M.S."/>
            <person name="Eichler E.E."/>
            <person name="Adams M.D."/>
            <person name="Hunkapiller M.W."/>
            <person name="Myers E.W."/>
            <person name="Venter J.C."/>
        </authorList>
    </citation>
    <scope>NUCLEOTIDE SEQUENCE [LARGE SCALE GENOMIC DNA]</scope>
</reference>
<reference key="6">
    <citation type="journal article" date="2004" name="Genome Res.">
        <title>The status, quality, and expansion of the NIH full-length cDNA project: the Mammalian Gene Collection (MGC).</title>
        <authorList>
            <consortium name="The MGC Project Team"/>
        </authorList>
    </citation>
    <scope>NUCLEOTIDE SEQUENCE [LARGE SCALE MRNA] (ISOFORM 3)</scope>
    <source>
        <tissue>Brain</tissue>
    </source>
</reference>
<sequence length="171" mass="20100">MAMSQESLTFKDVFVDFTLEEWQQLDSAQKNLYRDVMLENYSHLVSVGYLVAKPDVIFRLGPGEESWMADGGTPVRTCAGEDRPEVWQVDEQIDHYKESQDKLPWQAAFIGKETLKDESGQESRTCRKSIYLSTEFDSVRQRLPKYYSWEKAFKTSFKLSWSKWKLCKKER</sequence>
<protein>
    <recommendedName>
        <fullName>KRAB domain-containing protein 4</fullName>
    </recommendedName>
    <alternativeName>
        <fullName>KRAB box domain-containing protein 4</fullName>
    </alternativeName>
</protein>
<comment type="interaction">
    <interactant intactId="EBI-12893625">
        <id>Q5JUW0-3</id>
    </interactant>
    <interactant intactId="EBI-718729">
        <id>P55212</id>
        <label>CASP6</label>
    </interactant>
    <organismsDiffer>false</organismsDiffer>
    <experiments>3</experiments>
</comment>
<comment type="interaction">
    <interactant intactId="EBI-12893625">
        <id>Q5JUW0-3</id>
    </interactant>
    <interactant intactId="EBI-8561769">
        <id>Q5SUL5</id>
        <label>HLA-A</label>
    </interactant>
    <organismsDiffer>false</organismsDiffer>
    <experiments>3</experiments>
</comment>
<comment type="interaction">
    <interactant intactId="EBI-12893625">
        <id>Q5JUW0-3</id>
    </interactant>
    <interactant intactId="EBI-399080">
        <id>Q92993</id>
        <label>KAT5</label>
    </interactant>
    <organismsDiffer>false</organismsDiffer>
    <experiments>3</experiments>
</comment>
<comment type="interaction">
    <interactant intactId="EBI-12893625">
        <id>Q5JUW0-3</id>
    </interactant>
    <interactant intactId="EBI-8639312">
        <id>P25800</id>
        <label>LMO1</label>
    </interactant>
    <organismsDiffer>false</organismsDiffer>
    <experiments>5</experiments>
</comment>
<comment type="interaction">
    <interactant intactId="EBI-12893625">
        <id>Q5JUW0-3</id>
    </interactant>
    <interactant intactId="EBI-11742507">
        <id>Q8TAP4-4</id>
        <label>LMO3</label>
    </interactant>
    <organismsDiffer>false</organismsDiffer>
    <experiments>6</experiments>
</comment>
<comment type="interaction">
    <interactant intactId="EBI-12893625">
        <id>Q5JUW0-3</id>
    </interactant>
    <interactant intactId="EBI-1224896">
        <id>O75489</id>
        <label>NDUFS3</label>
    </interactant>
    <organismsDiffer>false</organismsDiffer>
    <experiments>3</experiments>
</comment>
<comment type="interaction">
    <interactant intactId="EBI-12893625">
        <id>Q5JUW0-3</id>
    </interactant>
    <interactant intactId="EBI-1053424">
        <id>O43741</id>
        <label>PRKAB2</label>
    </interactant>
    <organismsDiffer>false</organismsDiffer>
    <experiments>3</experiments>
</comment>
<comment type="interaction">
    <interactant intactId="EBI-12893625">
        <id>Q5JUW0-3</id>
    </interactant>
    <interactant intactId="EBI-5280197">
        <id>O75400-2</id>
        <label>PRPF40A</label>
    </interactant>
    <organismsDiffer>false</organismsDiffer>
    <experiments>3</experiments>
</comment>
<comment type="interaction">
    <interactant intactId="EBI-12893625">
        <id>Q5JUW0-3</id>
    </interactant>
    <interactant intactId="EBI-9090795">
        <id>Q15047-2</id>
        <label>SETDB1</label>
    </interactant>
    <organismsDiffer>false</organismsDiffer>
    <experiments>3</experiments>
</comment>
<comment type="interaction">
    <interactant intactId="EBI-12893625">
        <id>Q5JUW0-3</id>
    </interactant>
    <interactant intactId="EBI-359832">
        <id>P61981</id>
        <label>YWHAG</label>
    </interactant>
    <organismsDiffer>false</organismsDiffer>
    <experiments>3</experiments>
</comment>
<comment type="alternative products">
    <event type="alternative splicing"/>
    <isoform>
        <id>Q5JUW0-1</id>
        <name>1</name>
        <sequence type="displayed"/>
    </isoform>
    <isoform>
        <id>Q5JUW0-2</id>
        <name>2</name>
        <sequence type="described" ref="VSP_018163"/>
    </isoform>
    <isoform>
        <id>Q5JUW0-3</id>
        <name>3</name>
        <sequence type="described" ref="VSP_018164 VSP_018165"/>
    </isoform>
</comment>
<comment type="tissue specificity">
    <text evidence="2">Expressed in brain, ovary, testis, prostate, tonsil, heart, bone marrow, colon, breast and kidney.</text>
</comment>
<comment type="caution">
    <text evidence="6">Despite its name, it does not contain a canonical C2H2-type zinc-finger, seems to be a partial inverted duplication of ZNF674.</text>
</comment>